<proteinExistence type="inferred from homology"/>
<reference key="1">
    <citation type="journal article" date="1997" name="Nature">
        <title>Molecular basis of symbiosis between Rhizobium and legumes.</title>
        <authorList>
            <person name="Freiberg C.A."/>
            <person name="Fellay R."/>
            <person name="Bairoch A."/>
            <person name="Broughton W.J."/>
            <person name="Rosenthal A."/>
            <person name="Perret X."/>
        </authorList>
    </citation>
    <scope>NUCLEOTIDE SEQUENCE [LARGE SCALE GENOMIC DNA]</scope>
    <source>
        <strain>NBRC 101917 / NGR234</strain>
    </source>
</reference>
<reference key="2">
    <citation type="journal article" date="2009" name="Appl. Environ. Microbiol.">
        <title>Rhizobium sp. strain NGR234 possesses a remarkable number of secretion systems.</title>
        <authorList>
            <person name="Schmeisser C."/>
            <person name="Liesegang H."/>
            <person name="Krysciak D."/>
            <person name="Bakkou N."/>
            <person name="Le Quere A."/>
            <person name="Wollherr A."/>
            <person name="Heinemeyer I."/>
            <person name="Morgenstern B."/>
            <person name="Pommerening-Roeser A."/>
            <person name="Flores M."/>
            <person name="Palacios R."/>
            <person name="Brenner S."/>
            <person name="Gottschalk G."/>
            <person name="Schmitz R.A."/>
            <person name="Broughton W.J."/>
            <person name="Perret X."/>
            <person name="Strittmatter A.W."/>
            <person name="Streit W.R."/>
        </authorList>
    </citation>
    <scope>NUCLEOTIDE SEQUENCE [LARGE SCALE GENOMIC DNA]</scope>
    <source>
        <strain>NBRC 101917 / NGR234</strain>
    </source>
</reference>
<organism>
    <name type="scientific">Sinorhizobium fredii (strain NBRC 101917 / NGR234)</name>
    <dbReference type="NCBI Taxonomy" id="394"/>
    <lineage>
        <taxon>Bacteria</taxon>
        <taxon>Pseudomonadati</taxon>
        <taxon>Pseudomonadota</taxon>
        <taxon>Alphaproteobacteria</taxon>
        <taxon>Hyphomicrobiales</taxon>
        <taxon>Rhizobiaceae</taxon>
        <taxon>Sinorhizobium/Ensifer group</taxon>
        <taxon>Sinorhizobium</taxon>
    </lineage>
</organism>
<dbReference type="EMBL" id="U00090">
    <property type="protein sequence ID" value="AAB92467.1"/>
    <property type="molecule type" value="Genomic_DNA"/>
</dbReference>
<dbReference type="RefSeq" id="NP_444039.1">
    <property type="nucleotide sequence ID" value="NC_000914.2"/>
</dbReference>
<dbReference type="RefSeq" id="WP_010875220.1">
    <property type="nucleotide sequence ID" value="NC_000914.2"/>
</dbReference>
<dbReference type="SMR" id="P55634"/>
<dbReference type="KEGG" id="rhi:NGR_a01860"/>
<dbReference type="PATRIC" id="fig|394.7.peg.184"/>
<dbReference type="eggNOG" id="COG4974">
    <property type="taxonomic scope" value="Bacteria"/>
</dbReference>
<dbReference type="HOGENOM" id="CLU_027562_23_3_5"/>
<dbReference type="OrthoDB" id="67979at2"/>
<dbReference type="Proteomes" id="UP000001054">
    <property type="component" value="Plasmid pNGR234a"/>
</dbReference>
<dbReference type="GO" id="GO:0003677">
    <property type="term" value="F:DNA binding"/>
    <property type="evidence" value="ECO:0007669"/>
    <property type="project" value="UniProtKB-KW"/>
</dbReference>
<dbReference type="GO" id="GO:0015074">
    <property type="term" value="P:DNA integration"/>
    <property type="evidence" value="ECO:0007669"/>
    <property type="project" value="UniProtKB-KW"/>
</dbReference>
<dbReference type="GO" id="GO:0006310">
    <property type="term" value="P:DNA recombination"/>
    <property type="evidence" value="ECO:0007669"/>
    <property type="project" value="UniProtKB-KW"/>
</dbReference>
<dbReference type="GO" id="GO:0075713">
    <property type="term" value="P:establishment of integrated proviral latency"/>
    <property type="evidence" value="ECO:0007669"/>
    <property type="project" value="UniProtKB-KW"/>
</dbReference>
<dbReference type="GO" id="GO:0046718">
    <property type="term" value="P:symbiont entry into host cell"/>
    <property type="evidence" value="ECO:0007669"/>
    <property type="project" value="UniProtKB-KW"/>
</dbReference>
<dbReference type="GO" id="GO:0044826">
    <property type="term" value="P:viral genome integration into host DNA"/>
    <property type="evidence" value="ECO:0007669"/>
    <property type="project" value="UniProtKB-KW"/>
</dbReference>
<dbReference type="CDD" id="cd01188">
    <property type="entry name" value="INT_RitA_C_like"/>
    <property type="match status" value="1"/>
</dbReference>
<dbReference type="Gene3D" id="1.10.150.130">
    <property type="match status" value="1"/>
</dbReference>
<dbReference type="Gene3D" id="1.10.443.10">
    <property type="entry name" value="Intergrase catalytic core"/>
    <property type="match status" value="1"/>
</dbReference>
<dbReference type="InterPro" id="IPR044068">
    <property type="entry name" value="CB"/>
</dbReference>
<dbReference type="InterPro" id="IPR011010">
    <property type="entry name" value="DNA_brk_join_enz"/>
</dbReference>
<dbReference type="InterPro" id="IPR013762">
    <property type="entry name" value="Integrase-like_cat_sf"/>
</dbReference>
<dbReference type="InterPro" id="IPR002104">
    <property type="entry name" value="Integrase_catalytic"/>
</dbReference>
<dbReference type="InterPro" id="IPR010998">
    <property type="entry name" value="Integrase_recombinase_N"/>
</dbReference>
<dbReference type="InterPro" id="IPR004107">
    <property type="entry name" value="Integrase_SAM-like_N"/>
</dbReference>
<dbReference type="InterPro" id="IPR050090">
    <property type="entry name" value="Tyrosine_recombinase_XerCD"/>
</dbReference>
<dbReference type="PANTHER" id="PTHR30349">
    <property type="entry name" value="PHAGE INTEGRASE-RELATED"/>
    <property type="match status" value="1"/>
</dbReference>
<dbReference type="PANTHER" id="PTHR30349:SF90">
    <property type="entry name" value="TYROSINE RECOMBINASE XERD"/>
    <property type="match status" value="1"/>
</dbReference>
<dbReference type="Pfam" id="PF02899">
    <property type="entry name" value="Phage_int_SAM_1"/>
    <property type="match status" value="1"/>
</dbReference>
<dbReference type="Pfam" id="PF00589">
    <property type="entry name" value="Phage_integrase"/>
    <property type="match status" value="1"/>
</dbReference>
<dbReference type="SUPFAM" id="SSF56349">
    <property type="entry name" value="DNA breaking-rejoining enzymes"/>
    <property type="match status" value="1"/>
</dbReference>
<dbReference type="PROSITE" id="PS51900">
    <property type="entry name" value="CB"/>
    <property type="match status" value="1"/>
</dbReference>
<dbReference type="PROSITE" id="PS51898">
    <property type="entry name" value="TYR_RECOMBINASE"/>
    <property type="match status" value="1"/>
</dbReference>
<evidence type="ECO:0000255" key="1">
    <source>
        <dbReference type="PROSITE-ProRule" id="PRU01246"/>
    </source>
</evidence>
<evidence type="ECO:0000255" key="2">
    <source>
        <dbReference type="PROSITE-ProRule" id="PRU01248"/>
    </source>
</evidence>
<evidence type="ECO:0000305" key="3"/>
<gene>
    <name type="ordered locus">NGR_a01860</name>
    <name type="ORF">y4rA</name>
</gene>
<comment type="similarity">
    <text evidence="3">Belongs to the 'phage' integrase family.</text>
</comment>
<accession>P55634</accession>
<geneLocation type="plasmid">
    <name>sym pNGR234a</name>
</geneLocation>
<feature type="chain" id="PRO_0000197577" description="Putative integrase/recombinase y4rA">
    <location>
        <begin position="1"/>
        <end position="409"/>
    </location>
</feature>
<feature type="domain" description="Core-binding (CB)" evidence="2">
    <location>
        <begin position="112"/>
        <end position="197"/>
    </location>
</feature>
<feature type="domain" description="Tyr recombinase" evidence="1">
    <location>
        <begin position="220"/>
        <end position="402"/>
    </location>
</feature>
<feature type="active site" evidence="1">
    <location>
        <position position="260"/>
    </location>
</feature>
<feature type="active site" evidence="1">
    <location>
        <position position="284"/>
    </location>
</feature>
<feature type="active site" evidence="1">
    <location>
        <position position="354"/>
    </location>
</feature>
<feature type="active site" evidence="1">
    <location>
        <position position="357"/>
    </location>
</feature>
<feature type="active site" evidence="1">
    <location>
        <position position="380"/>
    </location>
</feature>
<feature type="active site" description="O-(3'-phospho-DNA)-tyrosine intermediate" evidence="1">
    <location>
        <position position="389"/>
    </location>
</feature>
<name>Y4RA_SINFN</name>
<sequence length="409" mass="45528">MKYFVNADFALSRPPEGPVAIYIIPFAEWLVDRGYGLVSTRNQVLMAAGFSSWLRQKGIGLSDINGEHAGRYLLDRVQRPKLGDDAALRHLLAFLRSQNAIAEEIEVDHNPSAVEQHVQAYERHLRDARALSRQTIINYRPVVRDFLSFRFGDGEISLAQLRAADVTDFVQKKVSRLNMRRAKIVTTALRSFLSYARYRGDITSDLAAAVPIVANWSLSSIPRAIGRDDVSRLLSSIDRDTPIGCRDYAMILALARLGLRSSEVVTLELDDIDWVAGRIRVRGKHGRNELPLPADVGEAIADYLWRARPRNASRRVFLRDKAPIRGFVGPSGLGSIVRRSLKRTGIDSPTKGTHQFRHGLASEMLRGGASLGEIGEVLGHRHVQTTAIYAKVDLDALRTLALPWPGEAQ</sequence>
<protein>
    <recommendedName>
        <fullName>Putative integrase/recombinase y4rA</fullName>
    </recommendedName>
</protein>
<keyword id="KW-0229">DNA integration</keyword>
<keyword id="KW-0233">DNA recombination</keyword>
<keyword id="KW-0238">DNA-binding</keyword>
<keyword id="KW-0614">Plasmid</keyword>
<keyword id="KW-1185">Reference proteome</keyword>
<keyword id="KW-0814">Transposable element</keyword>
<keyword id="KW-1179">Viral genome integration</keyword>
<keyword id="KW-1160">Virus entry into host cell</keyword>